<sequence>MSVSNVFFVGLMGAGKTTVGRAVARRLDLPFFDSDHEIEARCGVRVPVIFEHEGEMGFRDRETQMIDELTARHGVVVATGGGAVLRPENRAFLRERGTVIYLRANPHDLYLRTRHDKNRPLLQTENPRARLEELHAIRDPLYREVAHFVIETGKPTVAQLVNMVLMQLEVAGIVVPPAASSPTSQVSRQS</sequence>
<name>AROK_RALN1</name>
<dbReference type="EC" id="2.7.1.71" evidence="1"/>
<dbReference type="EMBL" id="AL646052">
    <property type="protein sequence ID" value="CAD16679.1"/>
    <property type="molecule type" value="Genomic_DNA"/>
</dbReference>
<dbReference type="RefSeq" id="WP_011002875.1">
    <property type="nucleotide sequence ID" value="NC_003295.1"/>
</dbReference>
<dbReference type="SMR" id="Q8XV61"/>
<dbReference type="STRING" id="267608.RSc2970"/>
<dbReference type="EnsemblBacteria" id="CAD16679">
    <property type="protein sequence ID" value="CAD16679"/>
    <property type="gene ID" value="RSc2970"/>
</dbReference>
<dbReference type="KEGG" id="rso:RSc2970"/>
<dbReference type="eggNOG" id="COG0703">
    <property type="taxonomic scope" value="Bacteria"/>
</dbReference>
<dbReference type="HOGENOM" id="CLU_057607_2_2_4"/>
<dbReference type="UniPathway" id="UPA00053">
    <property type="reaction ID" value="UER00088"/>
</dbReference>
<dbReference type="Proteomes" id="UP000001436">
    <property type="component" value="Chromosome"/>
</dbReference>
<dbReference type="GO" id="GO:0005829">
    <property type="term" value="C:cytosol"/>
    <property type="evidence" value="ECO:0007669"/>
    <property type="project" value="TreeGrafter"/>
</dbReference>
<dbReference type="GO" id="GO:0005524">
    <property type="term" value="F:ATP binding"/>
    <property type="evidence" value="ECO:0007669"/>
    <property type="project" value="UniProtKB-UniRule"/>
</dbReference>
<dbReference type="GO" id="GO:0000287">
    <property type="term" value="F:magnesium ion binding"/>
    <property type="evidence" value="ECO:0007669"/>
    <property type="project" value="UniProtKB-UniRule"/>
</dbReference>
<dbReference type="GO" id="GO:0004765">
    <property type="term" value="F:shikimate kinase activity"/>
    <property type="evidence" value="ECO:0007669"/>
    <property type="project" value="UniProtKB-UniRule"/>
</dbReference>
<dbReference type="GO" id="GO:0008652">
    <property type="term" value="P:amino acid biosynthetic process"/>
    <property type="evidence" value="ECO:0007669"/>
    <property type="project" value="UniProtKB-KW"/>
</dbReference>
<dbReference type="GO" id="GO:0009073">
    <property type="term" value="P:aromatic amino acid family biosynthetic process"/>
    <property type="evidence" value="ECO:0007669"/>
    <property type="project" value="UniProtKB-KW"/>
</dbReference>
<dbReference type="GO" id="GO:0009423">
    <property type="term" value="P:chorismate biosynthetic process"/>
    <property type="evidence" value="ECO:0007669"/>
    <property type="project" value="UniProtKB-UniRule"/>
</dbReference>
<dbReference type="CDD" id="cd00464">
    <property type="entry name" value="SK"/>
    <property type="match status" value="1"/>
</dbReference>
<dbReference type="Gene3D" id="3.40.50.300">
    <property type="entry name" value="P-loop containing nucleotide triphosphate hydrolases"/>
    <property type="match status" value="1"/>
</dbReference>
<dbReference type="HAMAP" id="MF_00109">
    <property type="entry name" value="Shikimate_kinase"/>
    <property type="match status" value="1"/>
</dbReference>
<dbReference type="InterPro" id="IPR027417">
    <property type="entry name" value="P-loop_NTPase"/>
</dbReference>
<dbReference type="InterPro" id="IPR031322">
    <property type="entry name" value="Shikimate/glucono_kinase"/>
</dbReference>
<dbReference type="InterPro" id="IPR000623">
    <property type="entry name" value="Shikimate_kinase/TSH1"/>
</dbReference>
<dbReference type="InterPro" id="IPR023000">
    <property type="entry name" value="Shikimate_kinase_CS"/>
</dbReference>
<dbReference type="PANTHER" id="PTHR21087">
    <property type="entry name" value="SHIKIMATE KINASE"/>
    <property type="match status" value="1"/>
</dbReference>
<dbReference type="PANTHER" id="PTHR21087:SF16">
    <property type="entry name" value="SHIKIMATE KINASE 1, CHLOROPLASTIC"/>
    <property type="match status" value="1"/>
</dbReference>
<dbReference type="Pfam" id="PF01202">
    <property type="entry name" value="SKI"/>
    <property type="match status" value="1"/>
</dbReference>
<dbReference type="PRINTS" id="PR01100">
    <property type="entry name" value="SHIKIMTKNASE"/>
</dbReference>
<dbReference type="SUPFAM" id="SSF52540">
    <property type="entry name" value="P-loop containing nucleoside triphosphate hydrolases"/>
    <property type="match status" value="1"/>
</dbReference>
<dbReference type="PROSITE" id="PS01128">
    <property type="entry name" value="SHIKIMATE_KINASE"/>
    <property type="match status" value="1"/>
</dbReference>
<organism>
    <name type="scientific">Ralstonia nicotianae (strain ATCC BAA-1114 / GMI1000)</name>
    <name type="common">Ralstonia solanacearum</name>
    <dbReference type="NCBI Taxonomy" id="267608"/>
    <lineage>
        <taxon>Bacteria</taxon>
        <taxon>Pseudomonadati</taxon>
        <taxon>Pseudomonadota</taxon>
        <taxon>Betaproteobacteria</taxon>
        <taxon>Burkholderiales</taxon>
        <taxon>Burkholderiaceae</taxon>
        <taxon>Ralstonia</taxon>
        <taxon>Ralstonia solanacearum species complex</taxon>
    </lineage>
</organism>
<reference key="1">
    <citation type="journal article" date="2002" name="Nature">
        <title>Genome sequence of the plant pathogen Ralstonia solanacearum.</title>
        <authorList>
            <person name="Salanoubat M."/>
            <person name="Genin S."/>
            <person name="Artiguenave F."/>
            <person name="Gouzy J."/>
            <person name="Mangenot S."/>
            <person name="Arlat M."/>
            <person name="Billault A."/>
            <person name="Brottier P."/>
            <person name="Camus J.-C."/>
            <person name="Cattolico L."/>
            <person name="Chandler M."/>
            <person name="Choisne N."/>
            <person name="Claudel-Renard C."/>
            <person name="Cunnac S."/>
            <person name="Demange N."/>
            <person name="Gaspin C."/>
            <person name="Lavie M."/>
            <person name="Moisan A."/>
            <person name="Robert C."/>
            <person name="Saurin W."/>
            <person name="Schiex T."/>
            <person name="Siguier P."/>
            <person name="Thebault P."/>
            <person name="Whalen M."/>
            <person name="Wincker P."/>
            <person name="Levy M."/>
            <person name="Weissenbach J."/>
            <person name="Boucher C.A."/>
        </authorList>
    </citation>
    <scope>NUCLEOTIDE SEQUENCE [LARGE SCALE GENOMIC DNA]</scope>
    <source>
        <strain>ATCC BAA-1114 / GMI1000</strain>
    </source>
</reference>
<protein>
    <recommendedName>
        <fullName evidence="1">Shikimate kinase</fullName>
        <shortName evidence="1">SK</shortName>
        <ecNumber evidence="1">2.7.1.71</ecNumber>
    </recommendedName>
</protein>
<proteinExistence type="inferred from homology"/>
<gene>
    <name evidence="1" type="primary">aroK</name>
    <name type="ordered locus">RSc2970</name>
    <name type="ORF">RS01327</name>
</gene>
<feature type="chain" id="PRO_0000237918" description="Shikimate kinase">
    <location>
        <begin position="1"/>
        <end position="190"/>
    </location>
</feature>
<feature type="binding site" evidence="1">
    <location>
        <begin position="13"/>
        <end position="18"/>
    </location>
    <ligand>
        <name>ATP</name>
        <dbReference type="ChEBI" id="CHEBI:30616"/>
    </ligand>
</feature>
<feature type="binding site" evidence="1">
    <location>
        <position position="17"/>
    </location>
    <ligand>
        <name>Mg(2+)</name>
        <dbReference type="ChEBI" id="CHEBI:18420"/>
    </ligand>
</feature>
<feature type="binding site" evidence="1">
    <location>
        <position position="35"/>
    </location>
    <ligand>
        <name>substrate</name>
    </ligand>
</feature>
<feature type="binding site" evidence="1">
    <location>
        <position position="59"/>
    </location>
    <ligand>
        <name>substrate</name>
    </ligand>
</feature>
<feature type="binding site" evidence="1">
    <location>
        <position position="81"/>
    </location>
    <ligand>
        <name>substrate</name>
    </ligand>
</feature>
<feature type="binding site" evidence="1">
    <location>
        <position position="119"/>
    </location>
    <ligand>
        <name>ATP</name>
        <dbReference type="ChEBI" id="CHEBI:30616"/>
    </ligand>
</feature>
<feature type="binding site" evidence="1">
    <location>
        <position position="138"/>
    </location>
    <ligand>
        <name>substrate</name>
    </ligand>
</feature>
<keyword id="KW-0028">Amino-acid biosynthesis</keyword>
<keyword id="KW-0057">Aromatic amino acid biosynthesis</keyword>
<keyword id="KW-0067">ATP-binding</keyword>
<keyword id="KW-0963">Cytoplasm</keyword>
<keyword id="KW-0418">Kinase</keyword>
<keyword id="KW-0460">Magnesium</keyword>
<keyword id="KW-0479">Metal-binding</keyword>
<keyword id="KW-0547">Nucleotide-binding</keyword>
<keyword id="KW-1185">Reference proteome</keyword>
<keyword id="KW-0808">Transferase</keyword>
<evidence type="ECO:0000255" key="1">
    <source>
        <dbReference type="HAMAP-Rule" id="MF_00109"/>
    </source>
</evidence>
<accession>Q8XV61</accession>
<comment type="function">
    <text evidence="1">Catalyzes the specific phosphorylation of the 3-hydroxyl group of shikimic acid using ATP as a cosubstrate.</text>
</comment>
<comment type="catalytic activity">
    <reaction evidence="1">
        <text>shikimate + ATP = 3-phosphoshikimate + ADP + H(+)</text>
        <dbReference type="Rhea" id="RHEA:13121"/>
        <dbReference type="ChEBI" id="CHEBI:15378"/>
        <dbReference type="ChEBI" id="CHEBI:30616"/>
        <dbReference type="ChEBI" id="CHEBI:36208"/>
        <dbReference type="ChEBI" id="CHEBI:145989"/>
        <dbReference type="ChEBI" id="CHEBI:456216"/>
        <dbReference type="EC" id="2.7.1.71"/>
    </reaction>
</comment>
<comment type="cofactor">
    <cofactor evidence="1">
        <name>Mg(2+)</name>
        <dbReference type="ChEBI" id="CHEBI:18420"/>
    </cofactor>
    <text evidence="1">Binds 1 Mg(2+) ion per subunit.</text>
</comment>
<comment type="pathway">
    <text evidence="1">Metabolic intermediate biosynthesis; chorismate biosynthesis; chorismate from D-erythrose 4-phosphate and phosphoenolpyruvate: step 5/7.</text>
</comment>
<comment type="subunit">
    <text evidence="1">Monomer.</text>
</comment>
<comment type="subcellular location">
    <subcellularLocation>
        <location evidence="1">Cytoplasm</location>
    </subcellularLocation>
</comment>
<comment type="similarity">
    <text evidence="1">Belongs to the shikimate kinase family.</text>
</comment>